<sequence length="343" mass="38751">MKNQWKTSDFDYNLPVELIAQRPLADRSGSRLLYIDRSRRTVSHRQFNGFVEQVKPNDLVVLNDTKVIPARLFGHKQTGGKVECLVERILSKDRFLAHIRASKAPKLGSQIIIADNFKIIIEGRYNDLFECVLHSSASILDLLYQHGRIPLPPYIQREPDKDDQARYQTIFAERAGAVAAPTAGLHFNEETFDALRKKGAAITYVTLHVGAGTFQPVRADSLADHRMHHEWMEVSKAVCDAIAKCRKNNGRVIAVGTTVMRCLETATKNGECRPYAGETDLFIYPGFQFNCVDALLTNFHLPKSTLLMLVCAFGGYELVMEAYQKAVENRYRFFSYGDAMLIS</sequence>
<feature type="chain" id="PRO_1000075999" description="S-adenosylmethionine:tRNA ribosyltransferase-isomerase">
    <location>
        <begin position="1"/>
        <end position="343"/>
    </location>
</feature>
<reference key="1">
    <citation type="journal article" date="2009" name="Infect. Immun.">
        <title>Comparative genomics reveal extensive transposon-mediated genomic plasticity and diversity among potential effector proteins within the genus Coxiella.</title>
        <authorList>
            <person name="Beare P.A."/>
            <person name="Unsworth N."/>
            <person name="Andoh M."/>
            <person name="Voth D.E."/>
            <person name="Omsland A."/>
            <person name="Gilk S.D."/>
            <person name="Williams K.P."/>
            <person name="Sobral B.W."/>
            <person name="Kupko J.J. III"/>
            <person name="Porcella S.F."/>
            <person name="Samuel J.E."/>
            <person name="Heinzen R.A."/>
        </authorList>
    </citation>
    <scope>NUCLEOTIDE SEQUENCE [LARGE SCALE GENOMIC DNA]</scope>
    <source>
        <strain>Dugway 5J108-111</strain>
    </source>
</reference>
<accession>A9KFQ4</accession>
<protein>
    <recommendedName>
        <fullName evidence="1">S-adenosylmethionine:tRNA ribosyltransferase-isomerase</fullName>
        <ecNumber evidence="1">2.4.99.17</ecNumber>
    </recommendedName>
    <alternativeName>
        <fullName evidence="1">Queuosine biosynthesis protein QueA</fullName>
    </alternativeName>
</protein>
<dbReference type="EC" id="2.4.99.17" evidence="1"/>
<dbReference type="EMBL" id="CP000733">
    <property type="protein sequence ID" value="ABS76634.1"/>
    <property type="molecule type" value="Genomic_DNA"/>
</dbReference>
<dbReference type="RefSeq" id="WP_005770726.1">
    <property type="nucleotide sequence ID" value="NC_009727.1"/>
</dbReference>
<dbReference type="SMR" id="A9KFQ4"/>
<dbReference type="KEGG" id="cbd:CBUD_1289"/>
<dbReference type="HOGENOM" id="CLU_039110_1_0_6"/>
<dbReference type="UniPathway" id="UPA00392"/>
<dbReference type="Proteomes" id="UP000008555">
    <property type="component" value="Chromosome"/>
</dbReference>
<dbReference type="GO" id="GO:0005737">
    <property type="term" value="C:cytoplasm"/>
    <property type="evidence" value="ECO:0007669"/>
    <property type="project" value="UniProtKB-SubCell"/>
</dbReference>
<dbReference type="GO" id="GO:0051075">
    <property type="term" value="F:S-adenosylmethionine:tRNA ribosyltransferase-isomerase activity"/>
    <property type="evidence" value="ECO:0007669"/>
    <property type="project" value="UniProtKB-EC"/>
</dbReference>
<dbReference type="GO" id="GO:0008616">
    <property type="term" value="P:queuosine biosynthetic process"/>
    <property type="evidence" value="ECO:0007669"/>
    <property type="project" value="UniProtKB-UniRule"/>
</dbReference>
<dbReference type="GO" id="GO:0002099">
    <property type="term" value="P:tRNA wobble guanine modification"/>
    <property type="evidence" value="ECO:0007669"/>
    <property type="project" value="TreeGrafter"/>
</dbReference>
<dbReference type="FunFam" id="3.40.1780.10:FF:000001">
    <property type="entry name" value="S-adenosylmethionine:tRNA ribosyltransferase-isomerase"/>
    <property type="match status" value="1"/>
</dbReference>
<dbReference type="Gene3D" id="2.40.10.240">
    <property type="entry name" value="QueA-like"/>
    <property type="match status" value="1"/>
</dbReference>
<dbReference type="Gene3D" id="3.40.1780.10">
    <property type="entry name" value="QueA-like"/>
    <property type="match status" value="1"/>
</dbReference>
<dbReference type="HAMAP" id="MF_00113">
    <property type="entry name" value="QueA"/>
    <property type="match status" value="1"/>
</dbReference>
<dbReference type="InterPro" id="IPR003699">
    <property type="entry name" value="QueA"/>
</dbReference>
<dbReference type="InterPro" id="IPR042118">
    <property type="entry name" value="QueA_dom1"/>
</dbReference>
<dbReference type="InterPro" id="IPR042119">
    <property type="entry name" value="QueA_dom2"/>
</dbReference>
<dbReference type="InterPro" id="IPR036100">
    <property type="entry name" value="QueA_sf"/>
</dbReference>
<dbReference type="NCBIfam" id="NF001140">
    <property type="entry name" value="PRK00147.1"/>
    <property type="match status" value="1"/>
</dbReference>
<dbReference type="NCBIfam" id="TIGR00113">
    <property type="entry name" value="queA"/>
    <property type="match status" value="1"/>
</dbReference>
<dbReference type="PANTHER" id="PTHR30307">
    <property type="entry name" value="S-ADENOSYLMETHIONINE:TRNA RIBOSYLTRANSFERASE-ISOMERASE"/>
    <property type="match status" value="1"/>
</dbReference>
<dbReference type="PANTHER" id="PTHR30307:SF0">
    <property type="entry name" value="S-ADENOSYLMETHIONINE:TRNA RIBOSYLTRANSFERASE-ISOMERASE"/>
    <property type="match status" value="1"/>
</dbReference>
<dbReference type="Pfam" id="PF02547">
    <property type="entry name" value="Queuosine_synth"/>
    <property type="match status" value="1"/>
</dbReference>
<dbReference type="SUPFAM" id="SSF111337">
    <property type="entry name" value="QueA-like"/>
    <property type="match status" value="1"/>
</dbReference>
<organism>
    <name type="scientific">Coxiella burnetii (strain Dugway 5J108-111)</name>
    <dbReference type="NCBI Taxonomy" id="434922"/>
    <lineage>
        <taxon>Bacteria</taxon>
        <taxon>Pseudomonadati</taxon>
        <taxon>Pseudomonadota</taxon>
        <taxon>Gammaproteobacteria</taxon>
        <taxon>Legionellales</taxon>
        <taxon>Coxiellaceae</taxon>
        <taxon>Coxiella</taxon>
    </lineage>
</organism>
<comment type="function">
    <text evidence="1">Transfers and isomerizes the ribose moiety from AdoMet to the 7-aminomethyl group of 7-deazaguanine (preQ1-tRNA) to give epoxyqueuosine (oQ-tRNA).</text>
</comment>
<comment type="catalytic activity">
    <reaction evidence="1">
        <text>7-aminomethyl-7-carbaguanosine(34) in tRNA + S-adenosyl-L-methionine = epoxyqueuosine(34) in tRNA + adenine + L-methionine + 2 H(+)</text>
        <dbReference type="Rhea" id="RHEA:32155"/>
        <dbReference type="Rhea" id="RHEA-COMP:10342"/>
        <dbReference type="Rhea" id="RHEA-COMP:18582"/>
        <dbReference type="ChEBI" id="CHEBI:15378"/>
        <dbReference type="ChEBI" id="CHEBI:16708"/>
        <dbReference type="ChEBI" id="CHEBI:57844"/>
        <dbReference type="ChEBI" id="CHEBI:59789"/>
        <dbReference type="ChEBI" id="CHEBI:82833"/>
        <dbReference type="ChEBI" id="CHEBI:194443"/>
        <dbReference type="EC" id="2.4.99.17"/>
    </reaction>
</comment>
<comment type="pathway">
    <text evidence="1">tRNA modification; tRNA-queuosine biosynthesis.</text>
</comment>
<comment type="subunit">
    <text evidence="1">Monomer.</text>
</comment>
<comment type="subcellular location">
    <subcellularLocation>
        <location evidence="1">Cytoplasm</location>
    </subcellularLocation>
</comment>
<comment type="similarity">
    <text evidence="1">Belongs to the QueA family.</text>
</comment>
<gene>
    <name evidence="1" type="primary">queA</name>
    <name type="ordered locus">CBUD_1289</name>
</gene>
<name>QUEA_COXBN</name>
<evidence type="ECO:0000255" key="1">
    <source>
        <dbReference type="HAMAP-Rule" id="MF_00113"/>
    </source>
</evidence>
<keyword id="KW-0963">Cytoplasm</keyword>
<keyword id="KW-0671">Queuosine biosynthesis</keyword>
<keyword id="KW-0949">S-adenosyl-L-methionine</keyword>
<keyword id="KW-0808">Transferase</keyword>
<proteinExistence type="inferred from homology"/>